<feature type="chain" id="PRO_0000119519" description="Glutamate--tRNA ligase">
    <location>
        <begin position="1"/>
        <end position="481"/>
    </location>
</feature>
<feature type="region of interest" description="Disordered" evidence="2">
    <location>
        <begin position="139"/>
        <end position="159"/>
    </location>
</feature>
<feature type="short sequence motif" description="'HIGH' region" evidence="1">
    <location>
        <begin position="28"/>
        <end position="38"/>
    </location>
</feature>
<feature type="short sequence motif" description="'KMSKS' region" evidence="1">
    <location>
        <begin position="260"/>
        <end position="264"/>
    </location>
</feature>
<feature type="compositionally biased region" description="Basic and acidic residues" evidence="2">
    <location>
        <begin position="139"/>
        <end position="148"/>
    </location>
</feature>
<feature type="binding site" evidence="1">
    <location>
        <position position="263"/>
    </location>
    <ligand>
        <name>ATP</name>
        <dbReference type="ChEBI" id="CHEBI:30616"/>
    </ligand>
</feature>
<gene>
    <name evidence="1" type="primary">gltX</name>
    <name type="ordered locus">BPP3898</name>
</gene>
<comment type="function">
    <text evidence="1">Catalyzes the attachment of glutamate to tRNA(Glu) in a two-step reaction: glutamate is first activated by ATP to form Glu-AMP and then transferred to the acceptor end of tRNA(Glu).</text>
</comment>
<comment type="catalytic activity">
    <reaction evidence="1">
        <text>tRNA(Glu) + L-glutamate + ATP = L-glutamyl-tRNA(Glu) + AMP + diphosphate</text>
        <dbReference type="Rhea" id="RHEA:23540"/>
        <dbReference type="Rhea" id="RHEA-COMP:9663"/>
        <dbReference type="Rhea" id="RHEA-COMP:9680"/>
        <dbReference type="ChEBI" id="CHEBI:29985"/>
        <dbReference type="ChEBI" id="CHEBI:30616"/>
        <dbReference type="ChEBI" id="CHEBI:33019"/>
        <dbReference type="ChEBI" id="CHEBI:78442"/>
        <dbReference type="ChEBI" id="CHEBI:78520"/>
        <dbReference type="ChEBI" id="CHEBI:456215"/>
        <dbReference type="EC" id="6.1.1.17"/>
    </reaction>
</comment>
<comment type="subunit">
    <text evidence="1">Monomer.</text>
</comment>
<comment type="subcellular location">
    <subcellularLocation>
        <location evidence="1">Cytoplasm</location>
    </subcellularLocation>
</comment>
<comment type="similarity">
    <text evidence="1">Belongs to the class-I aminoacyl-tRNA synthetase family. Glutamate--tRNA ligase type 1 subfamily.</text>
</comment>
<organism>
    <name type="scientific">Bordetella parapertussis (strain 12822 / ATCC BAA-587 / NCTC 13253)</name>
    <dbReference type="NCBI Taxonomy" id="257311"/>
    <lineage>
        <taxon>Bacteria</taxon>
        <taxon>Pseudomonadati</taxon>
        <taxon>Pseudomonadota</taxon>
        <taxon>Betaproteobacteria</taxon>
        <taxon>Burkholderiales</taxon>
        <taxon>Alcaligenaceae</taxon>
        <taxon>Bordetella</taxon>
    </lineage>
</organism>
<dbReference type="EC" id="6.1.1.17" evidence="1"/>
<dbReference type="EMBL" id="BX640435">
    <property type="protein sequence ID" value="CAE39181.1"/>
    <property type="molecule type" value="Genomic_DNA"/>
</dbReference>
<dbReference type="RefSeq" id="WP_010929301.1">
    <property type="nucleotide sequence ID" value="NC_002928.3"/>
</dbReference>
<dbReference type="SMR" id="Q7W3X9"/>
<dbReference type="GeneID" id="93205698"/>
<dbReference type="KEGG" id="bpa:BPP3898"/>
<dbReference type="HOGENOM" id="CLU_015768_6_3_4"/>
<dbReference type="Proteomes" id="UP000001421">
    <property type="component" value="Chromosome"/>
</dbReference>
<dbReference type="GO" id="GO:0005829">
    <property type="term" value="C:cytosol"/>
    <property type="evidence" value="ECO:0007669"/>
    <property type="project" value="TreeGrafter"/>
</dbReference>
<dbReference type="GO" id="GO:0005524">
    <property type="term" value="F:ATP binding"/>
    <property type="evidence" value="ECO:0007669"/>
    <property type="project" value="UniProtKB-UniRule"/>
</dbReference>
<dbReference type="GO" id="GO:0004818">
    <property type="term" value="F:glutamate-tRNA ligase activity"/>
    <property type="evidence" value="ECO:0007669"/>
    <property type="project" value="UniProtKB-UniRule"/>
</dbReference>
<dbReference type="GO" id="GO:0000049">
    <property type="term" value="F:tRNA binding"/>
    <property type="evidence" value="ECO:0007669"/>
    <property type="project" value="InterPro"/>
</dbReference>
<dbReference type="GO" id="GO:0008270">
    <property type="term" value="F:zinc ion binding"/>
    <property type="evidence" value="ECO:0007669"/>
    <property type="project" value="InterPro"/>
</dbReference>
<dbReference type="GO" id="GO:0006424">
    <property type="term" value="P:glutamyl-tRNA aminoacylation"/>
    <property type="evidence" value="ECO:0007669"/>
    <property type="project" value="UniProtKB-UniRule"/>
</dbReference>
<dbReference type="CDD" id="cd00808">
    <property type="entry name" value="GluRS_core"/>
    <property type="match status" value="1"/>
</dbReference>
<dbReference type="FunFam" id="3.40.50.620:FF:000007">
    <property type="entry name" value="Glutamate--tRNA ligase"/>
    <property type="match status" value="1"/>
</dbReference>
<dbReference type="Gene3D" id="1.10.10.350">
    <property type="match status" value="1"/>
</dbReference>
<dbReference type="Gene3D" id="3.40.50.620">
    <property type="entry name" value="HUPs"/>
    <property type="match status" value="1"/>
</dbReference>
<dbReference type="HAMAP" id="MF_00022">
    <property type="entry name" value="Glu_tRNA_synth_type1"/>
    <property type="match status" value="1"/>
</dbReference>
<dbReference type="InterPro" id="IPR045462">
    <property type="entry name" value="aa-tRNA-synth_I_cd-bd"/>
</dbReference>
<dbReference type="InterPro" id="IPR020751">
    <property type="entry name" value="aa-tRNA-synth_I_codon-bd_sub2"/>
</dbReference>
<dbReference type="InterPro" id="IPR001412">
    <property type="entry name" value="aa-tRNA-synth_I_CS"/>
</dbReference>
<dbReference type="InterPro" id="IPR008925">
    <property type="entry name" value="aa_tRNA-synth_I_cd-bd_sf"/>
</dbReference>
<dbReference type="InterPro" id="IPR004527">
    <property type="entry name" value="Glu-tRNA-ligase_bac/mito"/>
</dbReference>
<dbReference type="InterPro" id="IPR000924">
    <property type="entry name" value="Glu/Gln-tRNA-synth"/>
</dbReference>
<dbReference type="InterPro" id="IPR020058">
    <property type="entry name" value="Glu/Gln-tRNA-synth_Ib_cat-dom"/>
</dbReference>
<dbReference type="InterPro" id="IPR049940">
    <property type="entry name" value="GluQ/Sye"/>
</dbReference>
<dbReference type="InterPro" id="IPR033910">
    <property type="entry name" value="GluRS_core"/>
</dbReference>
<dbReference type="InterPro" id="IPR014729">
    <property type="entry name" value="Rossmann-like_a/b/a_fold"/>
</dbReference>
<dbReference type="NCBIfam" id="TIGR00464">
    <property type="entry name" value="gltX_bact"/>
    <property type="match status" value="1"/>
</dbReference>
<dbReference type="PANTHER" id="PTHR43311">
    <property type="entry name" value="GLUTAMATE--TRNA LIGASE"/>
    <property type="match status" value="1"/>
</dbReference>
<dbReference type="PANTHER" id="PTHR43311:SF2">
    <property type="entry name" value="GLUTAMATE--TRNA LIGASE, MITOCHONDRIAL-RELATED"/>
    <property type="match status" value="1"/>
</dbReference>
<dbReference type="Pfam" id="PF19269">
    <property type="entry name" value="Anticodon_2"/>
    <property type="match status" value="1"/>
</dbReference>
<dbReference type="Pfam" id="PF00749">
    <property type="entry name" value="tRNA-synt_1c"/>
    <property type="match status" value="1"/>
</dbReference>
<dbReference type="PRINTS" id="PR00987">
    <property type="entry name" value="TRNASYNTHGLU"/>
</dbReference>
<dbReference type="SUPFAM" id="SSF48163">
    <property type="entry name" value="An anticodon-binding domain of class I aminoacyl-tRNA synthetases"/>
    <property type="match status" value="1"/>
</dbReference>
<dbReference type="SUPFAM" id="SSF52374">
    <property type="entry name" value="Nucleotidylyl transferase"/>
    <property type="match status" value="1"/>
</dbReference>
<dbReference type="PROSITE" id="PS00178">
    <property type="entry name" value="AA_TRNA_LIGASE_I"/>
    <property type="match status" value="1"/>
</dbReference>
<protein>
    <recommendedName>
        <fullName evidence="1">Glutamate--tRNA ligase</fullName>
        <ecNumber evidence="1">6.1.1.17</ecNumber>
    </recommendedName>
    <alternativeName>
        <fullName evidence="1">Glutamyl-tRNA synthetase</fullName>
        <shortName evidence="1">GluRS</shortName>
    </alternativeName>
</protein>
<proteinExistence type="inferred from homology"/>
<reference key="1">
    <citation type="journal article" date="2003" name="Nat. Genet.">
        <title>Comparative analysis of the genome sequences of Bordetella pertussis, Bordetella parapertussis and Bordetella bronchiseptica.</title>
        <authorList>
            <person name="Parkhill J."/>
            <person name="Sebaihia M."/>
            <person name="Preston A."/>
            <person name="Murphy L.D."/>
            <person name="Thomson N.R."/>
            <person name="Harris D.E."/>
            <person name="Holden M.T.G."/>
            <person name="Churcher C.M."/>
            <person name="Bentley S.D."/>
            <person name="Mungall K.L."/>
            <person name="Cerdeno-Tarraga A.-M."/>
            <person name="Temple L."/>
            <person name="James K.D."/>
            <person name="Harris B."/>
            <person name="Quail M.A."/>
            <person name="Achtman M."/>
            <person name="Atkin R."/>
            <person name="Baker S."/>
            <person name="Basham D."/>
            <person name="Bason N."/>
            <person name="Cherevach I."/>
            <person name="Chillingworth T."/>
            <person name="Collins M."/>
            <person name="Cronin A."/>
            <person name="Davis P."/>
            <person name="Doggett J."/>
            <person name="Feltwell T."/>
            <person name="Goble A."/>
            <person name="Hamlin N."/>
            <person name="Hauser H."/>
            <person name="Holroyd S."/>
            <person name="Jagels K."/>
            <person name="Leather S."/>
            <person name="Moule S."/>
            <person name="Norberczak H."/>
            <person name="O'Neil S."/>
            <person name="Ormond D."/>
            <person name="Price C."/>
            <person name="Rabbinowitsch E."/>
            <person name="Rutter S."/>
            <person name="Sanders M."/>
            <person name="Saunders D."/>
            <person name="Seeger K."/>
            <person name="Sharp S."/>
            <person name="Simmonds M."/>
            <person name="Skelton J."/>
            <person name="Squares R."/>
            <person name="Squares S."/>
            <person name="Stevens K."/>
            <person name="Unwin L."/>
            <person name="Whitehead S."/>
            <person name="Barrell B.G."/>
            <person name="Maskell D.J."/>
        </authorList>
    </citation>
    <scope>NUCLEOTIDE SEQUENCE [LARGE SCALE GENOMIC DNA]</scope>
    <source>
        <strain>12822 / ATCC BAA-587 / NCTC 13253</strain>
    </source>
</reference>
<sequence>MAQSAERPRPYAFMTANATRPVRTRFAPSPTGFLHLGGARTALFSWAFARHHQGVFVLRIEDTDVERSTPEAVQAILDSMDWLGMQPDEGPFYQMKRMDRYAEVLAGMLEAGTAYHCYCSPEEVDAMREAARAKGLKPRYDGTWRPEPGKTLPPVPADRKPVIRFRNPIDGATSWNDMVKGPISFDNGELDDLIIARPDGTPTYNFCVVVDDWDMGITHVLRGDDHVNNTPRQINILRALGATLPEYGHVPMILGPDGEKLSKRHGAVNVMEYDAQGYLPEAMINYLARLGWSHGDDELFTREQLVEWFDTRHLSKSASQWDPKKLNWVNAHYIKGMDDAELAGRVAPRVERRGGKPQAADLPAIMGLLKDRAETLEQLAEDAMLFCGEYQPAPAELAAQHLTETARAALADFAARARDTEWNRAAISALIKAVLADRGLKMPQLGIPLRVAVTGRAQTPAVDAVLELLGKETVLARLQAL</sequence>
<keyword id="KW-0030">Aminoacyl-tRNA synthetase</keyword>
<keyword id="KW-0067">ATP-binding</keyword>
<keyword id="KW-0963">Cytoplasm</keyword>
<keyword id="KW-0436">Ligase</keyword>
<keyword id="KW-0547">Nucleotide-binding</keyword>
<keyword id="KW-0648">Protein biosynthesis</keyword>
<accession>Q7W3X9</accession>
<name>SYE_BORPA</name>
<evidence type="ECO:0000255" key="1">
    <source>
        <dbReference type="HAMAP-Rule" id="MF_00022"/>
    </source>
</evidence>
<evidence type="ECO:0000256" key="2">
    <source>
        <dbReference type="SAM" id="MobiDB-lite"/>
    </source>
</evidence>